<dbReference type="EC" id="3.6.1.31" evidence="1"/>
<dbReference type="EMBL" id="CP000109">
    <property type="protein sequence ID" value="ABB42560.1"/>
    <property type="molecule type" value="Genomic_DNA"/>
</dbReference>
<dbReference type="SMR" id="Q31E63"/>
<dbReference type="STRING" id="317025.Tcr_1970"/>
<dbReference type="KEGG" id="tcx:Tcr_1970"/>
<dbReference type="eggNOG" id="COG0140">
    <property type="taxonomic scope" value="Bacteria"/>
</dbReference>
<dbReference type="HOGENOM" id="CLU_123337_1_2_6"/>
<dbReference type="OrthoDB" id="9814738at2"/>
<dbReference type="UniPathway" id="UPA00031">
    <property type="reaction ID" value="UER00007"/>
</dbReference>
<dbReference type="GO" id="GO:0005737">
    <property type="term" value="C:cytoplasm"/>
    <property type="evidence" value="ECO:0007669"/>
    <property type="project" value="UniProtKB-SubCell"/>
</dbReference>
<dbReference type="GO" id="GO:0005524">
    <property type="term" value="F:ATP binding"/>
    <property type="evidence" value="ECO:0007669"/>
    <property type="project" value="UniProtKB-KW"/>
</dbReference>
<dbReference type="GO" id="GO:0004636">
    <property type="term" value="F:phosphoribosyl-ATP diphosphatase activity"/>
    <property type="evidence" value="ECO:0007669"/>
    <property type="project" value="UniProtKB-UniRule"/>
</dbReference>
<dbReference type="GO" id="GO:0000105">
    <property type="term" value="P:L-histidine biosynthetic process"/>
    <property type="evidence" value="ECO:0007669"/>
    <property type="project" value="UniProtKB-UniRule"/>
</dbReference>
<dbReference type="CDD" id="cd11534">
    <property type="entry name" value="NTP-PPase_HisIE_like"/>
    <property type="match status" value="1"/>
</dbReference>
<dbReference type="FunFam" id="1.10.287.1080:FF:000002">
    <property type="entry name" value="Histidine biosynthesis bifunctional protein HisIE"/>
    <property type="match status" value="1"/>
</dbReference>
<dbReference type="Gene3D" id="1.10.287.1080">
    <property type="entry name" value="MazG-like"/>
    <property type="match status" value="1"/>
</dbReference>
<dbReference type="HAMAP" id="MF_01020">
    <property type="entry name" value="HisE"/>
    <property type="match status" value="1"/>
</dbReference>
<dbReference type="InterPro" id="IPR008179">
    <property type="entry name" value="HisE"/>
</dbReference>
<dbReference type="InterPro" id="IPR021130">
    <property type="entry name" value="PRib-ATP_PPHydrolase-like"/>
</dbReference>
<dbReference type="NCBIfam" id="TIGR03188">
    <property type="entry name" value="histidine_hisI"/>
    <property type="match status" value="1"/>
</dbReference>
<dbReference type="NCBIfam" id="NF001611">
    <property type="entry name" value="PRK00400.1-3"/>
    <property type="match status" value="1"/>
</dbReference>
<dbReference type="PANTHER" id="PTHR42945">
    <property type="entry name" value="HISTIDINE BIOSYNTHESIS BIFUNCTIONAL PROTEIN"/>
    <property type="match status" value="1"/>
</dbReference>
<dbReference type="PANTHER" id="PTHR42945:SF9">
    <property type="entry name" value="HISTIDINE BIOSYNTHESIS BIFUNCTIONAL PROTEIN HISIE"/>
    <property type="match status" value="1"/>
</dbReference>
<dbReference type="Pfam" id="PF01503">
    <property type="entry name" value="PRA-PH"/>
    <property type="match status" value="1"/>
</dbReference>
<dbReference type="SUPFAM" id="SSF101386">
    <property type="entry name" value="all-alpha NTP pyrophosphatases"/>
    <property type="match status" value="1"/>
</dbReference>
<reference key="1">
    <citation type="journal article" date="2006" name="PLoS Biol.">
        <title>The genome of deep-sea vent chemolithoautotroph Thiomicrospira crunogena XCL-2.</title>
        <authorList>
            <person name="Scott K.M."/>
            <person name="Sievert S.M."/>
            <person name="Abril F.N."/>
            <person name="Ball L.A."/>
            <person name="Barrett C.J."/>
            <person name="Blake R.A."/>
            <person name="Boller A.J."/>
            <person name="Chain P.S.G."/>
            <person name="Clark J.A."/>
            <person name="Davis C.R."/>
            <person name="Detter C."/>
            <person name="Do K.F."/>
            <person name="Dobrinski K.P."/>
            <person name="Faza B.I."/>
            <person name="Fitzpatrick K.A."/>
            <person name="Freyermuth S.K."/>
            <person name="Harmer T.L."/>
            <person name="Hauser L.J."/>
            <person name="Huegler M."/>
            <person name="Kerfeld C.A."/>
            <person name="Klotz M.G."/>
            <person name="Kong W.W."/>
            <person name="Land M."/>
            <person name="Lapidus A."/>
            <person name="Larimer F.W."/>
            <person name="Longo D.L."/>
            <person name="Lucas S."/>
            <person name="Malfatti S.A."/>
            <person name="Massey S.E."/>
            <person name="Martin D.D."/>
            <person name="McCuddin Z."/>
            <person name="Meyer F."/>
            <person name="Moore J.L."/>
            <person name="Ocampo L.H. Jr."/>
            <person name="Paul J.H."/>
            <person name="Paulsen I.T."/>
            <person name="Reep D.K."/>
            <person name="Ren Q."/>
            <person name="Ross R.L."/>
            <person name="Sato P.Y."/>
            <person name="Thomas P."/>
            <person name="Tinkham L.E."/>
            <person name="Zeruth G.T."/>
        </authorList>
    </citation>
    <scope>NUCLEOTIDE SEQUENCE [LARGE SCALE GENOMIC DNA]</scope>
    <source>
        <strain>DSM 25203 / XCL-2</strain>
    </source>
</reference>
<gene>
    <name evidence="1" type="primary">hisE</name>
    <name type="ordered locus">Tcr_1970</name>
</gene>
<protein>
    <recommendedName>
        <fullName evidence="1">Phosphoribosyl-ATP pyrophosphatase</fullName>
        <shortName evidence="1">PRA-PH</shortName>
        <ecNumber evidence="1">3.6.1.31</ecNumber>
    </recommendedName>
</protein>
<proteinExistence type="inferred from homology"/>
<organism>
    <name type="scientific">Hydrogenovibrio crunogenus (strain DSM 25203 / XCL-2)</name>
    <name type="common">Thiomicrospira crunogena</name>
    <dbReference type="NCBI Taxonomy" id="317025"/>
    <lineage>
        <taxon>Bacteria</taxon>
        <taxon>Pseudomonadati</taxon>
        <taxon>Pseudomonadota</taxon>
        <taxon>Gammaproteobacteria</taxon>
        <taxon>Thiotrichales</taxon>
        <taxon>Piscirickettsiaceae</taxon>
        <taxon>Hydrogenovibrio</taxon>
    </lineage>
</organism>
<sequence length="113" mass="12716">MSNDILLQLDKILDARKTESPETSYVASLYEKGLDKILKKVGEEATETVMAAKDAEYTQNNDNLVYEVADLWFHTLILLSHQGLSSTDITNELQKRFGLSGHEEKANRSKNDA</sequence>
<name>HIS2_HYDCU</name>
<keyword id="KW-0028">Amino-acid biosynthesis</keyword>
<keyword id="KW-0067">ATP-binding</keyword>
<keyword id="KW-0963">Cytoplasm</keyword>
<keyword id="KW-0368">Histidine biosynthesis</keyword>
<keyword id="KW-0378">Hydrolase</keyword>
<keyword id="KW-0547">Nucleotide-binding</keyword>
<comment type="catalytic activity">
    <reaction evidence="1">
        <text>1-(5-phospho-beta-D-ribosyl)-ATP + H2O = 1-(5-phospho-beta-D-ribosyl)-5'-AMP + diphosphate + H(+)</text>
        <dbReference type="Rhea" id="RHEA:22828"/>
        <dbReference type="ChEBI" id="CHEBI:15377"/>
        <dbReference type="ChEBI" id="CHEBI:15378"/>
        <dbReference type="ChEBI" id="CHEBI:33019"/>
        <dbReference type="ChEBI" id="CHEBI:59457"/>
        <dbReference type="ChEBI" id="CHEBI:73183"/>
        <dbReference type="EC" id="3.6.1.31"/>
    </reaction>
</comment>
<comment type="pathway">
    <text evidence="1">Amino-acid biosynthesis; L-histidine biosynthesis; L-histidine from 5-phospho-alpha-D-ribose 1-diphosphate: step 2/9.</text>
</comment>
<comment type="subcellular location">
    <subcellularLocation>
        <location evidence="1">Cytoplasm</location>
    </subcellularLocation>
</comment>
<comment type="similarity">
    <text evidence="1">Belongs to the PRA-PH family.</text>
</comment>
<feature type="chain" id="PRO_0000230194" description="Phosphoribosyl-ATP pyrophosphatase">
    <location>
        <begin position="1"/>
        <end position="113"/>
    </location>
</feature>
<evidence type="ECO:0000255" key="1">
    <source>
        <dbReference type="HAMAP-Rule" id="MF_01020"/>
    </source>
</evidence>
<accession>Q31E63</accession>